<proteinExistence type="inferred from homology"/>
<comment type="function">
    <text evidence="1">Catalyzes the ATP-dependent condensation of GlcN-Ins and L-cysteine to form L-Cys-GlcN-Ins.</text>
</comment>
<comment type="catalytic activity">
    <reaction evidence="1">
        <text>1D-myo-inositol 2-amino-2-deoxy-alpha-D-glucopyranoside + L-cysteine + ATP = 1D-myo-inositol 2-(L-cysteinylamino)-2-deoxy-alpha-D-glucopyranoside + AMP + diphosphate + H(+)</text>
        <dbReference type="Rhea" id="RHEA:26176"/>
        <dbReference type="ChEBI" id="CHEBI:15378"/>
        <dbReference type="ChEBI" id="CHEBI:30616"/>
        <dbReference type="ChEBI" id="CHEBI:33019"/>
        <dbReference type="ChEBI" id="CHEBI:35235"/>
        <dbReference type="ChEBI" id="CHEBI:58886"/>
        <dbReference type="ChEBI" id="CHEBI:58887"/>
        <dbReference type="ChEBI" id="CHEBI:456215"/>
        <dbReference type="EC" id="6.3.1.13"/>
    </reaction>
</comment>
<comment type="cofactor">
    <cofactor evidence="1">
        <name>Zn(2+)</name>
        <dbReference type="ChEBI" id="CHEBI:29105"/>
    </cofactor>
    <text evidence="1">Binds 1 zinc ion per subunit.</text>
</comment>
<comment type="subunit">
    <text evidence="1">Monomer.</text>
</comment>
<comment type="similarity">
    <text evidence="1">Belongs to the class-I aminoacyl-tRNA synthetase family. MshC subfamily.</text>
</comment>
<dbReference type="EC" id="6.3.1.13" evidence="1"/>
<dbReference type="EMBL" id="CP001964">
    <property type="protein sequence ID" value="ADG74905.1"/>
    <property type="molecule type" value="Genomic_DNA"/>
</dbReference>
<dbReference type="RefSeq" id="WP_013117239.1">
    <property type="nucleotide sequence ID" value="NC_014151.1"/>
</dbReference>
<dbReference type="SMR" id="D5UFA8"/>
<dbReference type="STRING" id="446466.Cfla_2010"/>
<dbReference type="KEGG" id="cfl:Cfla_2010"/>
<dbReference type="eggNOG" id="COG0215">
    <property type="taxonomic scope" value="Bacteria"/>
</dbReference>
<dbReference type="HOGENOM" id="CLU_013528_0_0_11"/>
<dbReference type="OrthoDB" id="9815130at2"/>
<dbReference type="Proteomes" id="UP000000849">
    <property type="component" value="Chromosome"/>
</dbReference>
<dbReference type="GO" id="GO:0005829">
    <property type="term" value="C:cytosol"/>
    <property type="evidence" value="ECO:0007669"/>
    <property type="project" value="TreeGrafter"/>
</dbReference>
<dbReference type="GO" id="GO:0005524">
    <property type="term" value="F:ATP binding"/>
    <property type="evidence" value="ECO:0007669"/>
    <property type="project" value="UniProtKB-KW"/>
</dbReference>
<dbReference type="GO" id="GO:0035446">
    <property type="term" value="F:cysteine-glucosaminylinositol ligase activity"/>
    <property type="evidence" value="ECO:0007669"/>
    <property type="project" value="UniProtKB-UniRule"/>
</dbReference>
<dbReference type="GO" id="GO:0004817">
    <property type="term" value="F:cysteine-tRNA ligase activity"/>
    <property type="evidence" value="ECO:0007669"/>
    <property type="project" value="TreeGrafter"/>
</dbReference>
<dbReference type="GO" id="GO:0008270">
    <property type="term" value="F:zinc ion binding"/>
    <property type="evidence" value="ECO:0007669"/>
    <property type="project" value="UniProtKB-UniRule"/>
</dbReference>
<dbReference type="GO" id="GO:0006423">
    <property type="term" value="P:cysteinyl-tRNA aminoacylation"/>
    <property type="evidence" value="ECO:0007669"/>
    <property type="project" value="TreeGrafter"/>
</dbReference>
<dbReference type="GO" id="GO:0010125">
    <property type="term" value="P:mycothiol biosynthetic process"/>
    <property type="evidence" value="ECO:0007669"/>
    <property type="project" value="UniProtKB-UniRule"/>
</dbReference>
<dbReference type="Gene3D" id="1.20.120.640">
    <property type="entry name" value="Anticodon-binding domain of a subclass of class I aminoacyl-tRNA synthetases"/>
    <property type="match status" value="1"/>
</dbReference>
<dbReference type="Gene3D" id="3.40.50.620">
    <property type="entry name" value="HUPs"/>
    <property type="match status" value="1"/>
</dbReference>
<dbReference type="HAMAP" id="MF_01697">
    <property type="entry name" value="MshC"/>
    <property type="match status" value="1"/>
</dbReference>
<dbReference type="InterPro" id="IPR024909">
    <property type="entry name" value="Cys-tRNA/MSH_ligase"/>
</dbReference>
<dbReference type="InterPro" id="IPR017812">
    <property type="entry name" value="Mycothiol_ligase_MshC"/>
</dbReference>
<dbReference type="InterPro" id="IPR014729">
    <property type="entry name" value="Rossmann-like_a/b/a_fold"/>
</dbReference>
<dbReference type="InterPro" id="IPR032678">
    <property type="entry name" value="tRNA-synt_1_cat_dom"/>
</dbReference>
<dbReference type="NCBIfam" id="TIGR03447">
    <property type="entry name" value="mycothiol_MshC"/>
    <property type="match status" value="1"/>
</dbReference>
<dbReference type="PANTHER" id="PTHR10890:SF3">
    <property type="entry name" value="CYSTEINE--TRNA LIGASE, CYTOPLASMIC"/>
    <property type="match status" value="1"/>
</dbReference>
<dbReference type="PANTHER" id="PTHR10890">
    <property type="entry name" value="CYSTEINYL-TRNA SYNTHETASE"/>
    <property type="match status" value="1"/>
</dbReference>
<dbReference type="Pfam" id="PF01406">
    <property type="entry name" value="tRNA-synt_1e"/>
    <property type="match status" value="1"/>
</dbReference>
<dbReference type="PRINTS" id="PR00983">
    <property type="entry name" value="TRNASYNTHCYS"/>
</dbReference>
<dbReference type="SUPFAM" id="SSF52374">
    <property type="entry name" value="Nucleotidylyl transferase"/>
    <property type="match status" value="1"/>
</dbReference>
<keyword id="KW-0067">ATP-binding</keyword>
<keyword id="KW-0436">Ligase</keyword>
<keyword id="KW-0479">Metal-binding</keyword>
<keyword id="KW-0547">Nucleotide-binding</keyword>
<keyword id="KW-1185">Reference proteome</keyword>
<keyword id="KW-0862">Zinc</keyword>
<sequence length="415" mass="43633">MLSWPAPQIPRLPGTGEPVRVLDTATGRLVVAATGPHARLYVCGITPYDATHLGHASTYVAFDVLVRAWLDEGKTVTYASNVTDVDDPLLERATATGVDWRDLAAQQTALYASDMTTLGVVPPDVYRGVVESVPQVVAAVDALLSRDAAYRLPAPDGGDDVYADLSADPGFGSVAGLEHAAMLALSAERGGDPDRPGKRSPLDPLLWRAERPGEPAWDAPGLGRGRPGWHVECAVIASDGLGVPFDVQGGGSDLAFPHHESSASHLRVLTGTPQPAAAHVHTGMVGYRGHKMSKSLGNLVLVSQLVADGVEPMAVRLAVLAHRYRSDWEWTDDVLATAQQRVARWRRALSGNGGPAAQPVLDGVRAAVADDLDTPRALAVVDAWATAALAGEVPFEEGAPGVVARTVDALLGVRM</sequence>
<organism>
    <name type="scientific">Cellulomonas flavigena (strain ATCC 482 / DSM 20109 / BCRC 11376 / JCM 18109 / NBRC 3775 / NCIMB 8073 / NRS 134)</name>
    <dbReference type="NCBI Taxonomy" id="446466"/>
    <lineage>
        <taxon>Bacteria</taxon>
        <taxon>Bacillati</taxon>
        <taxon>Actinomycetota</taxon>
        <taxon>Actinomycetes</taxon>
        <taxon>Micrococcales</taxon>
        <taxon>Cellulomonadaceae</taxon>
        <taxon>Cellulomonas</taxon>
    </lineage>
</organism>
<protein>
    <recommendedName>
        <fullName evidence="1">L-cysteine:1D-myo-inositol 2-amino-2-deoxy-alpha-D-glucopyranoside ligase</fullName>
        <shortName evidence="1">L-Cys:GlcN-Ins ligase</shortName>
        <ecNumber evidence="1">6.3.1.13</ecNumber>
    </recommendedName>
    <alternativeName>
        <fullName evidence="1">Mycothiol ligase</fullName>
        <shortName evidence="1">MSH ligase</shortName>
    </alternativeName>
</protein>
<accession>D5UFA8</accession>
<evidence type="ECO:0000255" key="1">
    <source>
        <dbReference type="HAMAP-Rule" id="MF_01697"/>
    </source>
</evidence>
<gene>
    <name evidence="1" type="primary">mshC</name>
    <name type="ordered locus">Cfla_2010</name>
</gene>
<reference key="1">
    <citation type="journal article" date="2010" name="Stand. Genomic Sci.">
        <title>Complete genome sequence of Cellulomonas flavigena type strain (134).</title>
        <authorList>
            <person name="Abt B."/>
            <person name="Foster B."/>
            <person name="Lapidus A."/>
            <person name="Clum A."/>
            <person name="Sun H."/>
            <person name="Pukall R."/>
            <person name="Lucas S."/>
            <person name="Glavina Del Rio T."/>
            <person name="Nolan M."/>
            <person name="Tice H."/>
            <person name="Cheng J.F."/>
            <person name="Pitluck S."/>
            <person name="Liolios K."/>
            <person name="Ivanova N."/>
            <person name="Mavromatis K."/>
            <person name="Ovchinnikova G."/>
            <person name="Pati A."/>
            <person name="Goodwin L."/>
            <person name="Chen A."/>
            <person name="Palaniappan K."/>
            <person name="Land M."/>
            <person name="Hauser L."/>
            <person name="Chang Y.J."/>
            <person name="Jeffries C.D."/>
            <person name="Rohde M."/>
            <person name="Goker M."/>
            <person name="Woyke T."/>
            <person name="Bristow J."/>
            <person name="Eisen J.A."/>
            <person name="Markowitz V."/>
            <person name="Hugenholtz P."/>
            <person name="Kyrpides N.C."/>
            <person name="Klenk H.P."/>
        </authorList>
    </citation>
    <scope>NUCLEOTIDE SEQUENCE [LARGE SCALE GENOMIC DNA]</scope>
    <source>
        <strain>ATCC 482 / DSM 20109 / BCRC 11376 / JCM 18109 / NBRC 3775 / NCIMB 8073 / NRS 134</strain>
    </source>
</reference>
<name>MSHC_CELFN</name>
<feature type="chain" id="PRO_0000400434" description="L-cysteine:1D-myo-inositol 2-amino-2-deoxy-alpha-D-glucopyranoside ligase">
    <location>
        <begin position="1"/>
        <end position="415"/>
    </location>
</feature>
<feature type="short sequence motif" description="'HIGH' region" evidence="1">
    <location>
        <begin position="45"/>
        <end position="55"/>
    </location>
</feature>
<feature type="short sequence motif" description="'ERGGDP' region" evidence="1">
    <location>
        <begin position="188"/>
        <end position="193"/>
    </location>
</feature>
<feature type="short sequence motif" description="'KMSKS' region" evidence="1">
    <location>
        <begin position="291"/>
        <end position="295"/>
    </location>
</feature>
<feature type="binding site" evidence="1">
    <location>
        <begin position="43"/>
        <end position="46"/>
    </location>
    <ligand>
        <name>L-cysteinyl-5'-AMP</name>
        <dbReference type="ChEBI" id="CHEBI:144924"/>
    </ligand>
</feature>
<feature type="binding site" evidence="1">
    <location>
        <position position="43"/>
    </location>
    <ligand>
        <name>Zn(2+)</name>
        <dbReference type="ChEBI" id="CHEBI:29105"/>
    </ligand>
</feature>
<feature type="binding site" evidence="1">
    <location>
        <position position="58"/>
    </location>
    <ligand>
        <name>L-cysteinyl-5'-AMP</name>
        <dbReference type="ChEBI" id="CHEBI:144924"/>
    </ligand>
</feature>
<feature type="binding site" evidence="1">
    <location>
        <begin position="81"/>
        <end position="83"/>
    </location>
    <ligand>
        <name>L-cysteinyl-5'-AMP</name>
        <dbReference type="ChEBI" id="CHEBI:144924"/>
    </ligand>
</feature>
<feature type="binding site" evidence="1">
    <location>
        <position position="229"/>
    </location>
    <ligand>
        <name>L-cysteinyl-5'-AMP</name>
        <dbReference type="ChEBI" id="CHEBI:144924"/>
    </ligand>
</feature>
<feature type="binding site" evidence="1">
    <location>
        <position position="233"/>
    </location>
    <ligand>
        <name>Zn(2+)</name>
        <dbReference type="ChEBI" id="CHEBI:29105"/>
    </ligand>
</feature>
<feature type="binding site" evidence="1">
    <location>
        <begin position="251"/>
        <end position="253"/>
    </location>
    <ligand>
        <name>L-cysteinyl-5'-AMP</name>
        <dbReference type="ChEBI" id="CHEBI:144924"/>
    </ligand>
</feature>
<feature type="binding site" evidence="1">
    <location>
        <position position="258"/>
    </location>
    <ligand>
        <name>Zn(2+)</name>
        <dbReference type="ChEBI" id="CHEBI:29105"/>
    </ligand>
</feature>
<feature type="binding site" evidence="1">
    <location>
        <position position="285"/>
    </location>
    <ligand>
        <name>L-cysteinyl-5'-AMP</name>
        <dbReference type="ChEBI" id="CHEBI:144924"/>
    </ligand>
</feature>